<protein>
    <recommendedName>
        <fullName>Uncharacterized protein AF_2236</fullName>
    </recommendedName>
</protein>
<gene>
    <name type="ordered locus">AF_2236</name>
</gene>
<sequence length="211" mass="24138">MPTQAANEALAILRDASQFQWYVITLLLVVIYIYASEIHQKNYRAVFAGLAFWGMDWFNEIWNALVFHFTNYAAVWMAPGKTAYLILIGLNIEISMMFAIMGVAATKLLPEDRKAKIFGINNRIFYAIVLSAACVVVEIILNAANVLVWEYWWWNAKMPLLIFLIGYLPFFLVAYWVYDMDLVEKQAAVSFGILAIDAVLLIVFAGLMEWI</sequence>
<organism>
    <name type="scientific">Archaeoglobus fulgidus (strain ATCC 49558 / DSM 4304 / JCM 9628 / NBRC 100126 / VC-16)</name>
    <dbReference type="NCBI Taxonomy" id="224325"/>
    <lineage>
        <taxon>Archaea</taxon>
        <taxon>Methanobacteriati</taxon>
        <taxon>Methanobacteriota</taxon>
        <taxon>Archaeoglobi</taxon>
        <taxon>Archaeoglobales</taxon>
        <taxon>Archaeoglobaceae</taxon>
        <taxon>Archaeoglobus</taxon>
    </lineage>
</organism>
<comment type="subcellular location">
    <subcellularLocation>
        <location evidence="2">Cell membrane</location>
        <topology evidence="2">Multi-pass membrane protein</topology>
    </subcellularLocation>
</comment>
<keyword id="KW-1003">Cell membrane</keyword>
<keyword id="KW-0472">Membrane</keyword>
<keyword id="KW-1185">Reference proteome</keyword>
<keyword id="KW-0812">Transmembrane</keyword>
<keyword id="KW-1133">Transmembrane helix</keyword>
<feature type="chain" id="PRO_0000128126" description="Uncharacterized protein AF_2236">
    <location>
        <begin position="1"/>
        <end position="211"/>
    </location>
</feature>
<feature type="transmembrane region" description="Helical" evidence="1">
    <location>
        <begin position="21"/>
        <end position="38"/>
    </location>
</feature>
<feature type="transmembrane region" description="Helical" evidence="1">
    <location>
        <begin position="53"/>
        <end position="75"/>
    </location>
</feature>
<feature type="transmembrane region" description="Helical" evidence="1">
    <location>
        <begin position="82"/>
        <end position="104"/>
    </location>
</feature>
<feature type="transmembrane region" description="Helical" evidence="1">
    <location>
        <begin position="124"/>
        <end position="146"/>
    </location>
</feature>
<feature type="transmembrane region" description="Helical" evidence="1">
    <location>
        <begin position="159"/>
        <end position="178"/>
    </location>
</feature>
<feature type="transmembrane region" description="Helical" evidence="1">
    <location>
        <begin position="188"/>
        <end position="210"/>
    </location>
</feature>
<dbReference type="EMBL" id="AE000782">
    <property type="protein sequence ID" value="AAB89020.1"/>
    <property type="molecule type" value="Genomic_DNA"/>
</dbReference>
<dbReference type="PIR" id="D69529">
    <property type="entry name" value="D69529"/>
</dbReference>
<dbReference type="RefSeq" id="WP_010879725.1">
    <property type="nucleotide sequence ID" value="NC_000917.1"/>
</dbReference>
<dbReference type="PaxDb" id="224325-AF_2236"/>
<dbReference type="EnsemblBacteria" id="AAB89020">
    <property type="protein sequence ID" value="AAB89020"/>
    <property type="gene ID" value="AF_2236"/>
</dbReference>
<dbReference type="KEGG" id="afu:AF_2236"/>
<dbReference type="HOGENOM" id="CLU_1308432_0_0_2"/>
<dbReference type="OrthoDB" id="384017at2157"/>
<dbReference type="Proteomes" id="UP000002199">
    <property type="component" value="Chromosome"/>
</dbReference>
<dbReference type="GO" id="GO:0005886">
    <property type="term" value="C:plasma membrane"/>
    <property type="evidence" value="ECO:0007669"/>
    <property type="project" value="UniProtKB-SubCell"/>
</dbReference>
<reference key="1">
    <citation type="journal article" date="1997" name="Nature">
        <title>The complete genome sequence of the hyperthermophilic, sulphate-reducing archaeon Archaeoglobus fulgidus.</title>
        <authorList>
            <person name="Klenk H.-P."/>
            <person name="Clayton R.A."/>
            <person name="Tomb J.-F."/>
            <person name="White O."/>
            <person name="Nelson K.E."/>
            <person name="Ketchum K.A."/>
            <person name="Dodson R.J."/>
            <person name="Gwinn M.L."/>
            <person name="Hickey E.K."/>
            <person name="Peterson J.D."/>
            <person name="Richardson D.L."/>
            <person name="Kerlavage A.R."/>
            <person name="Graham D.E."/>
            <person name="Kyrpides N.C."/>
            <person name="Fleischmann R.D."/>
            <person name="Quackenbush J."/>
            <person name="Lee N.H."/>
            <person name="Sutton G.G."/>
            <person name="Gill S.R."/>
            <person name="Kirkness E.F."/>
            <person name="Dougherty B.A."/>
            <person name="McKenney K."/>
            <person name="Adams M.D."/>
            <person name="Loftus B.J."/>
            <person name="Peterson S.N."/>
            <person name="Reich C.I."/>
            <person name="McNeil L.K."/>
            <person name="Badger J.H."/>
            <person name="Glodek A."/>
            <person name="Zhou L."/>
            <person name="Overbeek R."/>
            <person name="Gocayne J.D."/>
            <person name="Weidman J.F."/>
            <person name="McDonald L.A."/>
            <person name="Utterback T.R."/>
            <person name="Cotton M.D."/>
            <person name="Spriggs T."/>
            <person name="Artiach P."/>
            <person name="Kaine B.P."/>
            <person name="Sykes S.M."/>
            <person name="Sadow P.W."/>
            <person name="D'Andrea K.P."/>
            <person name="Bowman C."/>
            <person name="Fujii C."/>
            <person name="Garland S.A."/>
            <person name="Mason T.M."/>
            <person name="Olsen G.J."/>
            <person name="Fraser C.M."/>
            <person name="Smith H.O."/>
            <person name="Woese C.R."/>
            <person name="Venter J.C."/>
        </authorList>
    </citation>
    <scope>NUCLEOTIDE SEQUENCE [LARGE SCALE GENOMIC DNA]</scope>
    <source>
        <strain>ATCC 49558 / DSM 4304 / JCM 9628 / NBRC 100126 / VC-16</strain>
    </source>
</reference>
<accession>O28047</accession>
<evidence type="ECO:0000255" key="1"/>
<evidence type="ECO:0000305" key="2"/>
<name>Y2236_ARCFU</name>
<proteinExistence type="predicted"/>